<accession>P75248</accession>
<dbReference type="EMBL" id="U00089">
    <property type="protein sequence ID" value="AAB95960.1"/>
    <property type="molecule type" value="Genomic_DNA"/>
</dbReference>
<dbReference type="PIR" id="S73638">
    <property type="entry name" value="S73638"/>
</dbReference>
<dbReference type="RefSeq" id="NP_110219.1">
    <property type="nucleotide sequence ID" value="NC_000912.1"/>
</dbReference>
<dbReference type="RefSeq" id="WP_010874887.1">
    <property type="nucleotide sequence ID" value="NZ_OU342337.1"/>
</dbReference>
<dbReference type="SMR" id="P75248"/>
<dbReference type="STRING" id="272634.MPN_530"/>
<dbReference type="EnsemblBacteria" id="AAB95960">
    <property type="protein sequence ID" value="AAB95960"/>
    <property type="gene ID" value="MPN_530"/>
</dbReference>
<dbReference type="KEGG" id="mpn:MPN_530"/>
<dbReference type="PATRIC" id="fig|272634.6.peg.591"/>
<dbReference type="HOGENOM" id="CLU_1873152_0_0_14"/>
<dbReference type="OrthoDB" id="9906221at2"/>
<dbReference type="BioCyc" id="MPNE272634:G1GJ3-875-MONOMER"/>
<dbReference type="Proteomes" id="UP000000808">
    <property type="component" value="Chromosome"/>
</dbReference>
<dbReference type="Gene3D" id="1.10.3960.10">
    <property type="entry name" value="MG354-like"/>
    <property type="match status" value="1"/>
</dbReference>
<dbReference type="InterPro" id="IPR015271">
    <property type="entry name" value="DUF1951"/>
</dbReference>
<dbReference type="InterPro" id="IPR035947">
    <property type="entry name" value="MG354-like_sf"/>
</dbReference>
<dbReference type="Pfam" id="PF09188">
    <property type="entry name" value="DUF1951"/>
    <property type="match status" value="1"/>
</dbReference>
<dbReference type="SUPFAM" id="SSF110009">
    <property type="entry name" value="Hypothetical protein MG354"/>
    <property type="match status" value="1"/>
</dbReference>
<reference key="1">
    <citation type="journal article" date="1996" name="Nucleic Acids Res.">
        <title>Complete sequence analysis of the genome of the bacterium Mycoplasma pneumoniae.</title>
        <authorList>
            <person name="Himmelreich R."/>
            <person name="Hilbert H."/>
            <person name="Plagens H."/>
            <person name="Pirkl E."/>
            <person name="Li B.-C."/>
            <person name="Herrmann R."/>
        </authorList>
    </citation>
    <scope>NUCLEOTIDE SEQUENCE [LARGE SCALE GENOMIC DNA]</scope>
    <source>
        <strain>ATCC 29342 / M129 / Subtype 1</strain>
    </source>
</reference>
<sequence>MEPNNLKEELVSVFEKACSSHKERLDFICSVRESDTFSNVDVPLAPIKTIIEIAKNEENQTEILKLAIENIKTLSTVGSGQYIASHFSTHNEVAIIFCISYFLYHFNFLHDENKKQLLKRAFEAVAEKIADYLNEN</sequence>
<feature type="chain" id="PRO_0000210562" description="Uncharacterized protein MG354 homolog">
    <location>
        <begin position="1"/>
        <end position="136"/>
    </location>
</feature>
<proteinExistence type="predicted"/>
<keyword id="KW-1185">Reference proteome</keyword>
<name>Y530_MYCPN</name>
<protein>
    <recommendedName>
        <fullName>Uncharacterized protein MG354 homolog</fullName>
    </recommendedName>
</protein>
<gene>
    <name type="ordered locus">MPN_530</name>
    <name type="ORF">G12_orf136</name>
    <name type="ORF">MP312</name>
</gene>
<organism>
    <name type="scientific">Mycoplasma pneumoniae (strain ATCC 29342 / M129 / Subtype 1)</name>
    <name type="common">Mycoplasmoides pneumoniae</name>
    <dbReference type="NCBI Taxonomy" id="272634"/>
    <lineage>
        <taxon>Bacteria</taxon>
        <taxon>Bacillati</taxon>
        <taxon>Mycoplasmatota</taxon>
        <taxon>Mycoplasmoidales</taxon>
        <taxon>Mycoplasmoidaceae</taxon>
        <taxon>Mycoplasmoides</taxon>
    </lineage>
</organism>